<keyword id="KW-0963">Cytoplasm</keyword>
<keyword id="KW-0479">Metal-binding</keyword>
<keyword id="KW-0862">Zinc</keyword>
<name>SPRT_PSEP7</name>
<feature type="chain" id="PRO_1000046531" description="Protein SprT">
    <location>
        <begin position="1"/>
        <end position="165"/>
    </location>
</feature>
<feature type="domain" description="SprT-like" evidence="1">
    <location>
        <begin position="10"/>
        <end position="157"/>
    </location>
</feature>
<feature type="active site" evidence="1">
    <location>
        <position position="70"/>
    </location>
</feature>
<feature type="binding site" evidence="1">
    <location>
        <position position="69"/>
    </location>
    <ligand>
        <name>Zn(2+)</name>
        <dbReference type="ChEBI" id="CHEBI:29105"/>
    </ligand>
</feature>
<feature type="binding site" evidence="1">
    <location>
        <position position="73"/>
    </location>
    <ligand>
        <name>Zn(2+)</name>
        <dbReference type="ChEBI" id="CHEBI:29105"/>
    </ligand>
</feature>
<reference key="1">
    <citation type="submission" date="2007-06" db="EMBL/GenBank/DDBJ databases">
        <authorList>
            <person name="Dodson R.J."/>
            <person name="Harkins D."/>
            <person name="Paulsen I.T."/>
        </authorList>
    </citation>
    <scope>NUCLEOTIDE SEQUENCE [LARGE SCALE GENOMIC DNA]</scope>
    <source>
        <strain>DSM 24068 / PA7</strain>
    </source>
</reference>
<dbReference type="EMBL" id="CP000744">
    <property type="protein sequence ID" value="ABR81947.1"/>
    <property type="molecule type" value="Genomic_DNA"/>
</dbReference>
<dbReference type="RefSeq" id="WP_003156924.1">
    <property type="nucleotide sequence ID" value="NC_009656.1"/>
</dbReference>
<dbReference type="GeneID" id="77222222"/>
<dbReference type="KEGG" id="pap:PSPA7_4190"/>
<dbReference type="HOGENOM" id="CLU_113336_0_1_6"/>
<dbReference type="Proteomes" id="UP000001582">
    <property type="component" value="Chromosome"/>
</dbReference>
<dbReference type="GO" id="GO:0005737">
    <property type="term" value="C:cytoplasm"/>
    <property type="evidence" value="ECO:0007669"/>
    <property type="project" value="UniProtKB-SubCell"/>
</dbReference>
<dbReference type="GO" id="GO:0008270">
    <property type="term" value="F:zinc ion binding"/>
    <property type="evidence" value="ECO:0007669"/>
    <property type="project" value="UniProtKB-UniRule"/>
</dbReference>
<dbReference type="GO" id="GO:0006950">
    <property type="term" value="P:response to stress"/>
    <property type="evidence" value="ECO:0007669"/>
    <property type="project" value="UniProtKB-ARBA"/>
</dbReference>
<dbReference type="HAMAP" id="MF_00746">
    <property type="entry name" value="SprT"/>
    <property type="match status" value="1"/>
</dbReference>
<dbReference type="InterPro" id="IPR006640">
    <property type="entry name" value="SprT-like_domain"/>
</dbReference>
<dbReference type="InterPro" id="IPR035240">
    <property type="entry name" value="SprT_Zn_ribbon"/>
</dbReference>
<dbReference type="InterPro" id="IPR023483">
    <property type="entry name" value="Uncharacterised_SprT"/>
</dbReference>
<dbReference type="NCBIfam" id="NF003421">
    <property type="entry name" value="PRK04860.1"/>
    <property type="match status" value="1"/>
</dbReference>
<dbReference type="PANTHER" id="PTHR38773">
    <property type="entry name" value="PROTEIN SPRT"/>
    <property type="match status" value="1"/>
</dbReference>
<dbReference type="PANTHER" id="PTHR38773:SF1">
    <property type="entry name" value="PROTEIN SPRT"/>
    <property type="match status" value="1"/>
</dbReference>
<dbReference type="Pfam" id="PF10263">
    <property type="entry name" value="SprT-like"/>
    <property type="match status" value="1"/>
</dbReference>
<dbReference type="Pfam" id="PF17283">
    <property type="entry name" value="Zn_ribbon_SprT"/>
    <property type="match status" value="1"/>
</dbReference>
<dbReference type="SMART" id="SM00731">
    <property type="entry name" value="SprT"/>
    <property type="match status" value="1"/>
</dbReference>
<dbReference type="PROSITE" id="PS00142">
    <property type="entry name" value="ZINC_PROTEASE"/>
    <property type="match status" value="1"/>
</dbReference>
<comment type="cofactor">
    <cofactor evidence="1">
        <name>Zn(2+)</name>
        <dbReference type="ChEBI" id="CHEBI:29105"/>
    </cofactor>
    <text evidence="1">Binds 1 zinc ion.</text>
</comment>
<comment type="subcellular location">
    <subcellularLocation>
        <location evidence="1">Cytoplasm</location>
    </subcellularLocation>
</comment>
<comment type="similarity">
    <text evidence="1">Belongs to the SprT family.</text>
</comment>
<proteinExistence type="inferred from homology"/>
<accession>A6V910</accession>
<sequence length="165" mass="19661">MPEHLNARVEACYRQAEDFFQRTFPRPTVSFRLRGQKAGVAHLDENLLRFNPQLYRENREHFLEQTVAHEVAHLIAHQLFGPRIRPHGEEWQLIMRGIYGLPPDRCHTYAVKRRTATRYLYRCHCPEHNDFPFSAQRHNLVAKGRRYYCRRCKATLVFSGEVTRD</sequence>
<protein>
    <recommendedName>
        <fullName evidence="1">Protein SprT</fullName>
    </recommendedName>
</protein>
<organism>
    <name type="scientific">Pseudomonas paraeruginosa (strain DSM 24068 / PA7)</name>
    <name type="common">Pseudomonas aeruginosa (strain PA7)</name>
    <dbReference type="NCBI Taxonomy" id="381754"/>
    <lineage>
        <taxon>Bacteria</taxon>
        <taxon>Pseudomonadati</taxon>
        <taxon>Pseudomonadota</taxon>
        <taxon>Gammaproteobacteria</taxon>
        <taxon>Pseudomonadales</taxon>
        <taxon>Pseudomonadaceae</taxon>
        <taxon>Pseudomonas</taxon>
        <taxon>Pseudomonas paraeruginosa</taxon>
    </lineage>
</organism>
<evidence type="ECO:0000255" key="1">
    <source>
        <dbReference type="HAMAP-Rule" id="MF_00746"/>
    </source>
</evidence>
<gene>
    <name evidence="1" type="primary">sprT</name>
    <name type="ordered locus">PSPA7_4190</name>
</gene>